<protein>
    <recommendedName>
        <fullName evidence="1">Co-chaperonin GroES</fullName>
    </recommendedName>
    <alternativeName>
        <fullName evidence="1">10 kDa chaperonin</fullName>
    </alternativeName>
    <alternativeName>
        <fullName evidence="1">Chaperonin-10</fullName>
        <shortName evidence="1">Cpn10</shortName>
    </alternativeName>
</protein>
<proteinExistence type="inferred from homology"/>
<name>CH10_METSB</name>
<reference key="1">
    <citation type="journal article" date="2010" name="J. Bacteriol.">
        <title>Complete genome sequence of the aerobic facultative methanotroph Methylocella silvestris BL2.</title>
        <authorList>
            <person name="Chen Y."/>
            <person name="Crombie A."/>
            <person name="Rahman M.T."/>
            <person name="Dedysh S.N."/>
            <person name="Liesack W."/>
            <person name="Stott M.B."/>
            <person name="Alam M."/>
            <person name="Theisen A.R."/>
            <person name="Murrell J.C."/>
            <person name="Dunfield P.F."/>
        </authorList>
    </citation>
    <scope>NUCLEOTIDE SEQUENCE [LARGE SCALE GENOMIC DNA]</scope>
    <source>
        <strain>DSM 15510 / CIP 108128 / LMG 27833 / NCIMB 13906 / BL2</strain>
    </source>
</reference>
<sequence>MSFRPLHDRVVVKRLEGEEKTKGGIIIPDTAKEKPQEGEIIAVGPGGRDDSGKLTPLDVKAGDKVLFGKWSGTEVKIDGQDLLIMKESDILGVVA</sequence>
<gene>
    <name evidence="1" type="primary">groES</name>
    <name evidence="1" type="synonym">groS</name>
    <name type="ordered locus">Msil_0794</name>
</gene>
<comment type="function">
    <text evidence="1">Together with the chaperonin GroEL, plays an essential role in assisting protein folding. The GroEL-GroES system forms a nano-cage that allows encapsulation of the non-native substrate proteins and provides a physical environment optimized to promote and accelerate protein folding. GroES binds to the apical surface of the GroEL ring, thereby capping the opening of the GroEL channel.</text>
</comment>
<comment type="subunit">
    <text evidence="1">Heptamer of 7 subunits arranged in a ring. Interacts with the chaperonin GroEL.</text>
</comment>
<comment type="subcellular location">
    <subcellularLocation>
        <location evidence="1">Cytoplasm</location>
    </subcellularLocation>
</comment>
<comment type="similarity">
    <text evidence="1">Belongs to the GroES chaperonin family.</text>
</comment>
<evidence type="ECO:0000255" key="1">
    <source>
        <dbReference type="HAMAP-Rule" id="MF_00580"/>
    </source>
</evidence>
<feature type="chain" id="PRO_1000146910" description="Co-chaperonin GroES">
    <location>
        <begin position="1"/>
        <end position="95"/>
    </location>
</feature>
<dbReference type="EMBL" id="CP001280">
    <property type="protein sequence ID" value="ACK49764.1"/>
    <property type="molecule type" value="Genomic_DNA"/>
</dbReference>
<dbReference type="RefSeq" id="WP_012589834.1">
    <property type="nucleotide sequence ID" value="NC_011666.1"/>
</dbReference>
<dbReference type="SMR" id="B8ER19"/>
<dbReference type="STRING" id="395965.Msil_0794"/>
<dbReference type="KEGG" id="msl:Msil_0794"/>
<dbReference type="eggNOG" id="COG0234">
    <property type="taxonomic scope" value="Bacteria"/>
</dbReference>
<dbReference type="HOGENOM" id="CLU_132825_1_0_5"/>
<dbReference type="OrthoDB" id="9806791at2"/>
<dbReference type="Proteomes" id="UP000002257">
    <property type="component" value="Chromosome"/>
</dbReference>
<dbReference type="GO" id="GO:0005737">
    <property type="term" value="C:cytoplasm"/>
    <property type="evidence" value="ECO:0007669"/>
    <property type="project" value="UniProtKB-SubCell"/>
</dbReference>
<dbReference type="GO" id="GO:0005524">
    <property type="term" value="F:ATP binding"/>
    <property type="evidence" value="ECO:0007669"/>
    <property type="project" value="InterPro"/>
</dbReference>
<dbReference type="GO" id="GO:0046872">
    <property type="term" value="F:metal ion binding"/>
    <property type="evidence" value="ECO:0007669"/>
    <property type="project" value="TreeGrafter"/>
</dbReference>
<dbReference type="GO" id="GO:0044183">
    <property type="term" value="F:protein folding chaperone"/>
    <property type="evidence" value="ECO:0007669"/>
    <property type="project" value="InterPro"/>
</dbReference>
<dbReference type="GO" id="GO:0051087">
    <property type="term" value="F:protein-folding chaperone binding"/>
    <property type="evidence" value="ECO:0007669"/>
    <property type="project" value="TreeGrafter"/>
</dbReference>
<dbReference type="GO" id="GO:0051082">
    <property type="term" value="F:unfolded protein binding"/>
    <property type="evidence" value="ECO:0007669"/>
    <property type="project" value="TreeGrafter"/>
</dbReference>
<dbReference type="GO" id="GO:0051085">
    <property type="term" value="P:chaperone cofactor-dependent protein refolding"/>
    <property type="evidence" value="ECO:0007669"/>
    <property type="project" value="TreeGrafter"/>
</dbReference>
<dbReference type="CDD" id="cd00320">
    <property type="entry name" value="cpn10"/>
    <property type="match status" value="1"/>
</dbReference>
<dbReference type="FunFam" id="2.30.33.40:FF:000001">
    <property type="entry name" value="10 kDa chaperonin"/>
    <property type="match status" value="1"/>
</dbReference>
<dbReference type="Gene3D" id="2.30.33.40">
    <property type="entry name" value="GroES chaperonin"/>
    <property type="match status" value="1"/>
</dbReference>
<dbReference type="HAMAP" id="MF_00580">
    <property type="entry name" value="CH10"/>
    <property type="match status" value="1"/>
</dbReference>
<dbReference type="InterPro" id="IPR020818">
    <property type="entry name" value="Chaperonin_GroES"/>
</dbReference>
<dbReference type="InterPro" id="IPR037124">
    <property type="entry name" value="Chaperonin_GroES_sf"/>
</dbReference>
<dbReference type="InterPro" id="IPR018369">
    <property type="entry name" value="Chaprnonin_Cpn10_CS"/>
</dbReference>
<dbReference type="InterPro" id="IPR011032">
    <property type="entry name" value="GroES-like_sf"/>
</dbReference>
<dbReference type="NCBIfam" id="NF001527">
    <property type="entry name" value="PRK00364.1-2"/>
    <property type="match status" value="1"/>
</dbReference>
<dbReference type="NCBIfam" id="NF001529">
    <property type="entry name" value="PRK00364.1-5"/>
    <property type="match status" value="1"/>
</dbReference>
<dbReference type="NCBIfam" id="NF001531">
    <property type="entry name" value="PRK00364.2-2"/>
    <property type="match status" value="1"/>
</dbReference>
<dbReference type="NCBIfam" id="NF001533">
    <property type="entry name" value="PRK00364.2-4"/>
    <property type="match status" value="1"/>
</dbReference>
<dbReference type="NCBIfam" id="NF001534">
    <property type="entry name" value="PRK00364.2-5"/>
    <property type="match status" value="1"/>
</dbReference>
<dbReference type="PANTHER" id="PTHR10772">
    <property type="entry name" value="10 KDA HEAT SHOCK PROTEIN"/>
    <property type="match status" value="1"/>
</dbReference>
<dbReference type="PANTHER" id="PTHR10772:SF58">
    <property type="entry name" value="CO-CHAPERONIN GROES"/>
    <property type="match status" value="1"/>
</dbReference>
<dbReference type="Pfam" id="PF00166">
    <property type="entry name" value="Cpn10"/>
    <property type="match status" value="1"/>
</dbReference>
<dbReference type="PRINTS" id="PR00297">
    <property type="entry name" value="CHAPERONIN10"/>
</dbReference>
<dbReference type="SMART" id="SM00883">
    <property type="entry name" value="Cpn10"/>
    <property type="match status" value="1"/>
</dbReference>
<dbReference type="SUPFAM" id="SSF50129">
    <property type="entry name" value="GroES-like"/>
    <property type="match status" value="1"/>
</dbReference>
<dbReference type="PROSITE" id="PS00681">
    <property type="entry name" value="CHAPERONINS_CPN10"/>
    <property type="match status" value="1"/>
</dbReference>
<organism>
    <name type="scientific">Methylocella silvestris (strain DSM 15510 / CIP 108128 / LMG 27833 / NCIMB 13906 / BL2)</name>
    <dbReference type="NCBI Taxonomy" id="395965"/>
    <lineage>
        <taxon>Bacteria</taxon>
        <taxon>Pseudomonadati</taxon>
        <taxon>Pseudomonadota</taxon>
        <taxon>Alphaproteobacteria</taxon>
        <taxon>Hyphomicrobiales</taxon>
        <taxon>Beijerinckiaceae</taxon>
        <taxon>Methylocella</taxon>
    </lineage>
</organism>
<accession>B8ER19</accession>
<keyword id="KW-0143">Chaperone</keyword>
<keyword id="KW-0963">Cytoplasm</keyword>
<keyword id="KW-1185">Reference proteome</keyword>